<sequence length="655" mass="73397">MGIFSIANQHIRFAVKLACAIVLALFVGFHFQLETPRWAVLTAAIVAAGPAFAAGGEPYSGAIRYRGMLRIIGTFIGCIAALTIIITMIRAPLLMILVCCIWAGFCTWISSLVRVENSYAWGLSGYTALIIVITIQAEPLLTPQFAVERCSEIVIGIVCAIMADLLFSPRSVKQEVDREVDGLLVAQYQLMQLCIKHGDSEEVDKAWGDLVRRTAALEGMRSNLNMESSRWGRANRRLKALNTLSLTLITQSCETYLIQNTHPELITDTFRELFETPVETAQDVHKQLKRMRRIIAWTGERETPVTLYTWAGAATRYLLLKRGVIGNAKISVTEEEVLQGEPVVKVESAERHHAMVNFWRTTLSCVLGTLFWLWTGWTSGSGAMVMIAVVTSLAMRLPNPRMVAIDFIYGTLAALPLGLLYFLVIIPNTQQSMLLLCLSLAVLGFFLGIEVQKRRLGSMGALASTINIIVLDNPMTFHFSQFLDSALGQIVGCMMAFIVILLVRDNSRDRTGRVLLNQFVSAAVSAMTTNVVRRKENHLPALYQQLFLLMNKFPGDLPKFRLALTMIIAHQRLRDAPIPVNHDLSAFHRQLRRTADHVISAGNDDKRRRYFGQLLDELDVYQEKLRVWEAPPRVTEPVKRLSGMLHKYQHALTDN</sequence>
<organism>
    <name type="scientific">Citrobacter koseri (strain ATCC BAA-895 / CDC 4225-83 / SGSC4696)</name>
    <dbReference type="NCBI Taxonomy" id="290338"/>
    <lineage>
        <taxon>Bacteria</taxon>
        <taxon>Pseudomonadati</taxon>
        <taxon>Pseudomonadota</taxon>
        <taxon>Gammaproteobacteria</taxon>
        <taxon>Enterobacterales</taxon>
        <taxon>Enterobacteriaceae</taxon>
        <taxon>Citrobacter</taxon>
    </lineage>
</organism>
<feature type="chain" id="PRO_1000068805" description="p-hydroxybenzoic acid efflux pump subunit AaeB">
    <location>
        <begin position="1"/>
        <end position="655"/>
    </location>
</feature>
<feature type="transmembrane region" description="Helical" evidence="1">
    <location>
        <begin position="13"/>
        <end position="33"/>
    </location>
</feature>
<feature type="transmembrane region" description="Helical" evidence="1">
    <location>
        <begin position="38"/>
        <end position="58"/>
    </location>
</feature>
<feature type="transmembrane region" description="Helical" evidence="1">
    <location>
        <begin position="69"/>
        <end position="89"/>
    </location>
</feature>
<feature type="transmembrane region" description="Helical" evidence="1">
    <location>
        <begin position="93"/>
        <end position="113"/>
    </location>
</feature>
<feature type="transmembrane region" description="Helical" evidence="1">
    <location>
        <begin position="121"/>
        <end position="141"/>
    </location>
</feature>
<feature type="transmembrane region" description="Helical" evidence="1">
    <location>
        <begin position="152"/>
        <end position="172"/>
    </location>
</feature>
<feature type="transmembrane region" description="Helical" evidence="1">
    <location>
        <begin position="370"/>
        <end position="390"/>
    </location>
</feature>
<feature type="transmembrane region" description="Helical" evidence="1">
    <location>
        <begin position="407"/>
        <end position="427"/>
    </location>
</feature>
<feature type="transmembrane region" description="Helical" evidence="1">
    <location>
        <begin position="431"/>
        <end position="451"/>
    </location>
</feature>
<feature type="transmembrane region" description="Helical" evidence="1">
    <location>
        <begin position="459"/>
        <end position="479"/>
    </location>
</feature>
<feature type="transmembrane region" description="Helical" evidence="1">
    <location>
        <begin position="482"/>
        <end position="502"/>
    </location>
</feature>
<gene>
    <name evidence="1" type="primary">aaeB</name>
    <name type="ordered locus">CKO_04647</name>
</gene>
<name>AAEB_CITK8</name>
<dbReference type="EMBL" id="CP000822">
    <property type="protein sequence ID" value="ABV15697.1"/>
    <property type="molecule type" value="Genomic_DNA"/>
</dbReference>
<dbReference type="RefSeq" id="WP_012135374.1">
    <property type="nucleotide sequence ID" value="NC_009792.1"/>
</dbReference>
<dbReference type="SMR" id="A8AQD4"/>
<dbReference type="STRING" id="290338.CKO_04647"/>
<dbReference type="GeneID" id="45138177"/>
<dbReference type="KEGG" id="cko:CKO_04647"/>
<dbReference type="HOGENOM" id="CLU_027647_0_0_6"/>
<dbReference type="OrthoDB" id="9807111at2"/>
<dbReference type="Proteomes" id="UP000008148">
    <property type="component" value="Chromosome"/>
</dbReference>
<dbReference type="GO" id="GO:0005886">
    <property type="term" value="C:plasma membrane"/>
    <property type="evidence" value="ECO:0007669"/>
    <property type="project" value="UniProtKB-SubCell"/>
</dbReference>
<dbReference type="GO" id="GO:0022857">
    <property type="term" value="F:transmembrane transporter activity"/>
    <property type="evidence" value="ECO:0007669"/>
    <property type="project" value="UniProtKB-UniRule"/>
</dbReference>
<dbReference type="GO" id="GO:0046942">
    <property type="term" value="P:carboxylic acid transport"/>
    <property type="evidence" value="ECO:0007669"/>
    <property type="project" value="InterPro"/>
</dbReference>
<dbReference type="HAMAP" id="MF_01545">
    <property type="entry name" value="AaeB"/>
    <property type="match status" value="1"/>
</dbReference>
<dbReference type="InterPro" id="IPR006726">
    <property type="entry name" value="PHBA_efflux_AaeB/fusaric-R"/>
</dbReference>
<dbReference type="InterPro" id="IPR023706">
    <property type="entry name" value="PHBA_efflux_pump_AaeB"/>
</dbReference>
<dbReference type="NCBIfam" id="NF007916">
    <property type="entry name" value="PRK10631.1"/>
    <property type="match status" value="1"/>
</dbReference>
<dbReference type="PANTHER" id="PTHR30509:SF9">
    <property type="entry name" value="MULTIDRUG RESISTANCE PROTEIN MDTO"/>
    <property type="match status" value="1"/>
</dbReference>
<dbReference type="PANTHER" id="PTHR30509">
    <property type="entry name" value="P-HYDROXYBENZOIC ACID EFFLUX PUMP SUBUNIT-RELATED"/>
    <property type="match status" value="1"/>
</dbReference>
<dbReference type="Pfam" id="PF04632">
    <property type="entry name" value="FUSC"/>
    <property type="match status" value="1"/>
</dbReference>
<keyword id="KW-0997">Cell inner membrane</keyword>
<keyword id="KW-1003">Cell membrane</keyword>
<keyword id="KW-0472">Membrane</keyword>
<keyword id="KW-1185">Reference proteome</keyword>
<keyword id="KW-0812">Transmembrane</keyword>
<keyword id="KW-1133">Transmembrane helix</keyword>
<keyword id="KW-0813">Transport</keyword>
<comment type="function">
    <text evidence="1">Forms an efflux pump with AaeA. Could function as a metabolic relief valve, allowing to eliminate certain compounds when they accumulate to high levels in the cell.</text>
</comment>
<comment type="subcellular location">
    <subcellularLocation>
        <location evidence="1">Cell inner membrane</location>
        <topology evidence="1">Multi-pass membrane protein</topology>
    </subcellularLocation>
</comment>
<comment type="similarity">
    <text evidence="1">Belongs to the aromatic acid exporter ArAE (TC 2.A.85) family.</text>
</comment>
<proteinExistence type="inferred from homology"/>
<protein>
    <recommendedName>
        <fullName evidence="1">p-hydroxybenzoic acid efflux pump subunit AaeB</fullName>
        <shortName evidence="1">pHBA efflux pump protein B</shortName>
    </recommendedName>
</protein>
<reference key="1">
    <citation type="submission" date="2007-08" db="EMBL/GenBank/DDBJ databases">
        <authorList>
            <consortium name="The Citrobacter koseri Genome Sequencing Project"/>
            <person name="McClelland M."/>
            <person name="Sanderson E.K."/>
            <person name="Porwollik S."/>
            <person name="Spieth J."/>
            <person name="Clifton W.S."/>
            <person name="Latreille P."/>
            <person name="Courtney L."/>
            <person name="Wang C."/>
            <person name="Pepin K."/>
            <person name="Bhonagiri V."/>
            <person name="Nash W."/>
            <person name="Johnson M."/>
            <person name="Thiruvilangam P."/>
            <person name="Wilson R."/>
        </authorList>
    </citation>
    <scope>NUCLEOTIDE SEQUENCE [LARGE SCALE GENOMIC DNA]</scope>
    <source>
        <strain>ATCC BAA-895 / CDC 4225-83 / SGSC4696</strain>
    </source>
</reference>
<evidence type="ECO:0000255" key="1">
    <source>
        <dbReference type="HAMAP-Rule" id="MF_01545"/>
    </source>
</evidence>
<accession>A8AQD4</accession>